<organism>
    <name type="scientific">Xenopus laevis</name>
    <name type="common">African clawed frog</name>
    <dbReference type="NCBI Taxonomy" id="8355"/>
    <lineage>
        <taxon>Eukaryota</taxon>
        <taxon>Metazoa</taxon>
        <taxon>Chordata</taxon>
        <taxon>Craniata</taxon>
        <taxon>Vertebrata</taxon>
        <taxon>Euteleostomi</taxon>
        <taxon>Amphibia</taxon>
        <taxon>Batrachia</taxon>
        <taxon>Anura</taxon>
        <taxon>Pipoidea</taxon>
        <taxon>Pipidae</taxon>
        <taxon>Xenopodinae</taxon>
        <taxon>Xenopus</taxon>
        <taxon>Xenopus</taxon>
    </lineage>
</organism>
<accession>Q90ZL4</accession>
<accession>Q6DE72</accession>
<feature type="initiator methionine" description="Removed" evidence="2">
    <location>
        <position position="1"/>
    </location>
</feature>
<feature type="chain" id="PRO_0000240419" description="Lissencephaly-1 homolog">
    <location>
        <begin position="2"/>
        <end position="410"/>
    </location>
</feature>
<feature type="domain" description="LisH" evidence="2">
    <location>
        <begin position="7"/>
        <end position="39"/>
    </location>
</feature>
<feature type="repeat" description="WD 1">
    <location>
        <begin position="106"/>
        <end position="147"/>
    </location>
</feature>
<feature type="repeat" description="WD 2">
    <location>
        <begin position="148"/>
        <end position="189"/>
    </location>
</feature>
<feature type="repeat" description="WD 3">
    <location>
        <begin position="190"/>
        <end position="229"/>
    </location>
</feature>
<feature type="repeat" description="WD 4">
    <location>
        <begin position="232"/>
        <end position="271"/>
    </location>
</feature>
<feature type="repeat" description="WD 5">
    <location>
        <begin position="274"/>
        <end position="333"/>
    </location>
</feature>
<feature type="repeat" description="WD 6">
    <location>
        <begin position="336"/>
        <end position="377"/>
    </location>
</feature>
<feature type="repeat" description="WD 7">
    <location>
        <begin position="379"/>
        <end position="410"/>
    </location>
</feature>
<feature type="coiled-coil region" evidence="2">
    <location>
        <begin position="56"/>
        <end position="82"/>
    </location>
</feature>
<feature type="sequence conflict" description="In Ref. 2; AAH77270." evidence="3" ref="2">
    <original>I</original>
    <variation>K</variation>
    <location>
        <position position="45"/>
    </location>
</feature>
<feature type="sequence conflict" description="In Ref. 2; AAH77270." evidence="3" ref="2">
    <original>L</original>
    <variation>I</variation>
    <location>
        <position position="185"/>
    </location>
</feature>
<feature type="sequence conflict" description="In Ref. 2; AAH77270." evidence="3" ref="2">
    <original>R</original>
    <variation>K</variation>
    <location>
        <position position="303"/>
    </location>
</feature>
<reference key="1">
    <citation type="submission" date="2001-04" db="EMBL/GenBank/DDBJ databases">
        <title>Xenopus laevis LIS1.</title>
        <authorList>
            <person name="Hayashi M.A.F."/>
            <person name="Hongo I."/>
            <person name="Okamoto H."/>
        </authorList>
    </citation>
    <scope>NUCLEOTIDE SEQUENCE [MRNA]</scope>
    <source>
        <tissue>Embryo</tissue>
    </source>
</reference>
<reference key="2">
    <citation type="submission" date="2004-07" db="EMBL/GenBank/DDBJ databases">
        <authorList>
            <consortium name="NIH - Xenopus Gene Collection (XGC) project"/>
        </authorList>
    </citation>
    <scope>NUCLEOTIDE SEQUENCE [LARGE SCALE MRNA]</scope>
    <source>
        <tissue>Kidney</tissue>
    </source>
</reference>
<protein>
    <recommendedName>
        <fullName evidence="2">Lissencephaly-1 homolog</fullName>
    </recommendedName>
</protein>
<comment type="function">
    <text evidence="1 2">Regulatory subunit (beta subunit) of the cytosolic type I platelet-activating factor (PAF) acetylhydrolase (PAF-AH (I)), an enzyme that catalyzes the hydrolyze of the acetyl group at the sn-2 position of PAF and its analogs and participates in PAF inactivation. Regulates the PAF-AH (I) activity in a catalytic dimer composition-dependent manner (By similarity). Positively regulates the activity of the minus-end directed microtubule motor protein dynein. May enhance dynein-mediated microtubule sliding by targeting dynein to the microtubule plus end. Required for several dynein- and microtubule-dependent processes such as the maintenance of Golgi integrity, the peripheral transport of microtubule fragments and the coupling of the nucleus and centrosome. May be required for proliferation of neuronal precursors and neuronal migration.</text>
</comment>
<comment type="subunit">
    <text evidence="1 2">Can self-associate. Component of the cytosolic PAF-AH (I) heterotetrameric enzyme, which is composed of PAFAH1B1 (beta), PAFAH1B2 (alpha2) and PAFAH1B3 (alpha1) subunits. The catalytic activity of the enzyme resides in the alpha1 (PAFAH1B3) and alpha2 (PAFAH1B2) subunits, whereas the beta subunit (PAFAH1B1) has regulatory activity. Trimer formation is not essential for the catalytic activity (By similarity). Interacts with dynein, dynactin, nde1 and ndel1.</text>
</comment>
<comment type="subcellular location">
    <subcellularLocation>
        <location evidence="2">Cytoplasm</location>
        <location evidence="2">Cytoskeleton</location>
    </subcellularLocation>
    <subcellularLocation>
        <location evidence="2">Cytoplasm</location>
        <location evidence="2">Cytoskeleton</location>
        <location evidence="2">Microtubule organizing center</location>
        <location evidence="2">Centrosome</location>
    </subcellularLocation>
    <text evidence="2">Localizes to the plus end of microtubules and to the centrosome.</text>
</comment>
<comment type="domain">
    <text evidence="2">Dimerization mediated by the LisH domain may be required to activate dynein.</text>
</comment>
<comment type="similarity">
    <text evidence="2">Belongs to the WD repeat LIS1/nudF family.</text>
</comment>
<proteinExistence type="evidence at transcript level"/>
<dbReference type="EMBL" id="AY032881">
    <property type="protein sequence ID" value="AAK52334.1"/>
    <property type="molecule type" value="mRNA"/>
</dbReference>
<dbReference type="EMBL" id="BC077270">
    <property type="protein sequence ID" value="AAH77270.1"/>
    <property type="molecule type" value="mRNA"/>
</dbReference>
<dbReference type="RefSeq" id="NP_001083934.1">
    <property type="nucleotide sequence ID" value="NM_001090465.1"/>
</dbReference>
<dbReference type="SMR" id="Q90ZL4"/>
<dbReference type="IntAct" id="Q90ZL4">
    <property type="interactions" value="2"/>
</dbReference>
<dbReference type="GeneID" id="399199"/>
<dbReference type="KEGG" id="xla:399199"/>
<dbReference type="AGR" id="Xenbase:XB-GENE-17330834"/>
<dbReference type="CTD" id="399199"/>
<dbReference type="Xenbase" id="XB-GENE-17330834">
    <property type="gene designation" value="pafah1b1.L"/>
</dbReference>
<dbReference type="OrthoDB" id="674604at2759"/>
<dbReference type="Proteomes" id="UP000186698">
    <property type="component" value="Chromosome 2L"/>
</dbReference>
<dbReference type="Bgee" id="399199">
    <property type="expression patterns" value="Expressed in testis and 19 other cell types or tissues"/>
</dbReference>
<dbReference type="GO" id="GO:0008247">
    <property type="term" value="C:1-alkyl-2-acetylglycerophosphocholine esterase complex"/>
    <property type="evidence" value="ECO:0000250"/>
    <property type="project" value="UniProtKB"/>
</dbReference>
<dbReference type="GO" id="GO:1904115">
    <property type="term" value="C:axon cytoplasm"/>
    <property type="evidence" value="ECO:0007669"/>
    <property type="project" value="GOC"/>
</dbReference>
<dbReference type="GO" id="GO:0005813">
    <property type="term" value="C:centrosome"/>
    <property type="evidence" value="ECO:0007669"/>
    <property type="project" value="UniProtKB-SubCell"/>
</dbReference>
<dbReference type="GO" id="GO:0030126">
    <property type="term" value="C:COPI vesicle coat"/>
    <property type="evidence" value="ECO:0007669"/>
    <property type="project" value="TreeGrafter"/>
</dbReference>
<dbReference type="GO" id="GO:0005881">
    <property type="term" value="C:cytoplasmic microtubule"/>
    <property type="evidence" value="ECO:0000318"/>
    <property type="project" value="GO_Central"/>
</dbReference>
<dbReference type="GO" id="GO:0000776">
    <property type="term" value="C:kinetochore"/>
    <property type="evidence" value="ECO:0000318"/>
    <property type="project" value="GO_Central"/>
</dbReference>
<dbReference type="GO" id="GO:0005875">
    <property type="term" value="C:microtubule associated complex"/>
    <property type="evidence" value="ECO:0000318"/>
    <property type="project" value="GO_Central"/>
</dbReference>
<dbReference type="GO" id="GO:0043005">
    <property type="term" value="C:neuron projection"/>
    <property type="evidence" value="ECO:0000318"/>
    <property type="project" value="GO_Central"/>
</dbReference>
<dbReference type="GO" id="GO:0043025">
    <property type="term" value="C:neuronal cell body"/>
    <property type="evidence" value="ECO:0000318"/>
    <property type="project" value="GO_Central"/>
</dbReference>
<dbReference type="GO" id="GO:0005635">
    <property type="term" value="C:nuclear envelope"/>
    <property type="evidence" value="ECO:0000318"/>
    <property type="project" value="GO_Central"/>
</dbReference>
<dbReference type="GO" id="GO:0070840">
    <property type="term" value="F:dynein complex binding"/>
    <property type="evidence" value="ECO:0000318"/>
    <property type="project" value="GO_Central"/>
</dbReference>
<dbReference type="GO" id="GO:0051010">
    <property type="term" value="F:microtubule plus-end binding"/>
    <property type="evidence" value="ECO:0000318"/>
    <property type="project" value="GO_Central"/>
</dbReference>
<dbReference type="GO" id="GO:0046982">
    <property type="term" value="F:protein heterodimerization activity"/>
    <property type="evidence" value="ECO:0000250"/>
    <property type="project" value="UniProtKB"/>
</dbReference>
<dbReference type="GO" id="GO:0048854">
    <property type="term" value="P:brain morphogenesis"/>
    <property type="evidence" value="ECO:0000318"/>
    <property type="project" value="GO_Central"/>
</dbReference>
<dbReference type="GO" id="GO:0051301">
    <property type="term" value="P:cell division"/>
    <property type="evidence" value="ECO:0007669"/>
    <property type="project" value="UniProtKB-KW"/>
</dbReference>
<dbReference type="GO" id="GO:0006888">
    <property type="term" value="P:endoplasmic reticulum to Golgi vesicle-mediated transport"/>
    <property type="evidence" value="ECO:0007669"/>
    <property type="project" value="TreeGrafter"/>
</dbReference>
<dbReference type="GO" id="GO:0000132">
    <property type="term" value="P:establishment of mitotic spindle orientation"/>
    <property type="evidence" value="ECO:0000318"/>
    <property type="project" value="GO_Central"/>
</dbReference>
<dbReference type="GO" id="GO:0007281">
    <property type="term" value="P:germ cell development"/>
    <property type="evidence" value="ECO:0000318"/>
    <property type="project" value="GO_Central"/>
</dbReference>
<dbReference type="GO" id="GO:0006891">
    <property type="term" value="P:intra-Golgi vesicle-mediated transport"/>
    <property type="evidence" value="ECO:0007669"/>
    <property type="project" value="TreeGrafter"/>
</dbReference>
<dbReference type="GO" id="GO:0006886">
    <property type="term" value="P:intracellular protein transport"/>
    <property type="evidence" value="ECO:0007669"/>
    <property type="project" value="TreeGrafter"/>
</dbReference>
<dbReference type="GO" id="GO:0031023">
    <property type="term" value="P:microtubule organizing center organization"/>
    <property type="evidence" value="ECO:0000318"/>
    <property type="project" value="GO_Central"/>
</dbReference>
<dbReference type="GO" id="GO:0051012">
    <property type="term" value="P:microtubule sliding"/>
    <property type="evidence" value="ECO:0007669"/>
    <property type="project" value="UniProtKB-UniRule"/>
</dbReference>
<dbReference type="GO" id="GO:0007097">
    <property type="term" value="P:nuclear migration"/>
    <property type="evidence" value="ECO:0000318"/>
    <property type="project" value="GO_Central"/>
</dbReference>
<dbReference type="GO" id="GO:0038026">
    <property type="term" value="P:reelin-mediated signaling pathway"/>
    <property type="evidence" value="ECO:0000250"/>
    <property type="project" value="UniProtKB"/>
</dbReference>
<dbReference type="GO" id="GO:0008090">
    <property type="term" value="P:retrograde axonal transport"/>
    <property type="evidence" value="ECO:0000318"/>
    <property type="project" value="GO_Central"/>
</dbReference>
<dbReference type="GO" id="GO:0006890">
    <property type="term" value="P:retrograde vesicle-mediated transport, Golgi to endoplasmic reticulum"/>
    <property type="evidence" value="ECO:0007669"/>
    <property type="project" value="TreeGrafter"/>
</dbReference>
<dbReference type="GO" id="GO:0047496">
    <property type="term" value="P:vesicle transport along microtubule"/>
    <property type="evidence" value="ECO:0000318"/>
    <property type="project" value="GO_Central"/>
</dbReference>
<dbReference type="CDD" id="cd00200">
    <property type="entry name" value="WD40"/>
    <property type="match status" value="1"/>
</dbReference>
<dbReference type="FunFam" id="2.130.10.10:FF:000038">
    <property type="entry name" value="Lissencephaly-1 homolog B"/>
    <property type="match status" value="1"/>
</dbReference>
<dbReference type="FunFam" id="1.20.960.30:FF:000002">
    <property type="entry name" value="Platelet-activating factor acetylhydrolase ib"/>
    <property type="match status" value="1"/>
</dbReference>
<dbReference type="Gene3D" id="1.20.960.30">
    <property type="match status" value="1"/>
</dbReference>
<dbReference type="Gene3D" id="2.130.10.10">
    <property type="entry name" value="YVTN repeat-like/Quinoprotein amine dehydrogenase"/>
    <property type="match status" value="1"/>
</dbReference>
<dbReference type="HAMAP" id="MF_03141">
    <property type="entry name" value="lis1"/>
    <property type="match status" value="1"/>
</dbReference>
<dbReference type="InterPro" id="IPR050844">
    <property type="entry name" value="Coatomer_complex_subunit"/>
</dbReference>
<dbReference type="InterPro" id="IPR017252">
    <property type="entry name" value="Dynein_regulator_LIS1"/>
</dbReference>
<dbReference type="InterPro" id="IPR020472">
    <property type="entry name" value="G-protein_beta_WD-40_rep"/>
</dbReference>
<dbReference type="InterPro" id="IPR037190">
    <property type="entry name" value="LIS1_N"/>
</dbReference>
<dbReference type="InterPro" id="IPR006594">
    <property type="entry name" value="LisH"/>
</dbReference>
<dbReference type="InterPro" id="IPR056795">
    <property type="entry name" value="PAC1-like_LisH-like_dom"/>
</dbReference>
<dbReference type="InterPro" id="IPR015943">
    <property type="entry name" value="WD40/YVTN_repeat-like_dom_sf"/>
</dbReference>
<dbReference type="InterPro" id="IPR019775">
    <property type="entry name" value="WD40_repeat_CS"/>
</dbReference>
<dbReference type="InterPro" id="IPR036322">
    <property type="entry name" value="WD40_repeat_dom_sf"/>
</dbReference>
<dbReference type="InterPro" id="IPR001680">
    <property type="entry name" value="WD40_rpt"/>
</dbReference>
<dbReference type="PANTHER" id="PTHR19876">
    <property type="entry name" value="COATOMER"/>
    <property type="match status" value="1"/>
</dbReference>
<dbReference type="PANTHER" id="PTHR19876:SF2">
    <property type="entry name" value="COATOMER SUBUNIT BETA"/>
    <property type="match status" value="1"/>
</dbReference>
<dbReference type="Pfam" id="PF24951">
    <property type="entry name" value="LisH_PAC1"/>
    <property type="match status" value="1"/>
</dbReference>
<dbReference type="Pfam" id="PF00400">
    <property type="entry name" value="WD40"/>
    <property type="match status" value="7"/>
</dbReference>
<dbReference type="PIRSF" id="PIRSF037647">
    <property type="entry name" value="Dynein_regulator_Lis1"/>
    <property type="match status" value="1"/>
</dbReference>
<dbReference type="PRINTS" id="PR00320">
    <property type="entry name" value="GPROTEINBRPT"/>
</dbReference>
<dbReference type="SMART" id="SM00667">
    <property type="entry name" value="LisH"/>
    <property type="match status" value="1"/>
</dbReference>
<dbReference type="SMART" id="SM00320">
    <property type="entry name" value="WD40"/>
    <property type="match status" value="7"/>
</dbReference>
<dbReference type="SUPFAM" id="SSF109925">
    <property type="entry name" value="Lissencephaly-1 protein (Lis-1, PAF-AH alpha) N-terminal domain"/>
    <property type="match status" value="1"/>
</dbReference>
<dbReference type="SUPFAM" id="SSF50978">
    <property type="entry name" value="WD40 repeat-like"/>
    <property type="match status" value="1"/>
</dbReference>
<dbReference type="PROSITE" id="PS50896">
    <property type="entry name" value="LISH"/>
    <property type="match status" value="1"/>
</dbReference>
<dbReference type="PROSITE" id="PS00678">
    <property type="entry name" value="WD_REPEATS_1"/>
    <property type="match status" value="4"/>
</dbReference>
<dbReference type="PROSITE" id="PS50082">
    <property type="entry name" value="WD_REPEATS_2"/>
    <property type="match status" value="7"/>
</dbReference>
<dbReference type="PROSITE" id="PS50294">
    <property type="entry name" value="WD_REPEATS_REGION"/>
    <property type="match status" value="1"/>
</dbReference>
<gene>
    <name type="primary">pafah1b1</name>
    <name evidence="2" type="synonym">lis1</name>
</gene>
<evidence type="ECO:0000250" key="1">
    <source>
        <dbReference type="UniProtKB" id="P43033"/>
    </source>
</evidence>
<evidence type="ECO:0000255" key="2">
    <source>
        <dbReference type="HAMAP-Rule" id="MF_03141"/>
    </source>
</evidence>
<evidence type="ECO:0000305" key="3"/>
<name>LIS1_XENLA</name>
<sequence length="410" mass="46762">MVLSQRQRDELNRAIADYLRSNGYEEAYSVFKKEAELDMNEELDIKYAGLLEKKWTSVIRLQKKVMELESKLNEAKEEFTSGGPIGQKRDPKEWIPRPPEKYALSGHRSPVTRVIFHPVFSVMVTASEDATIKVWDYETGDFERTLKGHTDSVQDISFDHSGKLLASCSADMTIKLWDFQGFECLRTMHGHDHNVSSVAIMPNGDHIVSASRDKTIKMWEVQTGYCVKTFTGHREWVRMVRPNQDGTLIASCSNDQTVRVWVVATKECKAELREHEHVVECISWAPESSYSTISDATGSETKRSGKPGPFLLSGSRDKTIKMWDISIGMCLMTLVGHDNWVRGVQFHPGGKFILSCADDKTIRIWDYKNKRCMKTLNAHEHFVTSLDFHKTAPYVVTGSVDQTVKVWECR</sequence>
<keyword id="KW-0131">Cell cycle</keyword>
<keyword id="KW-0132">Cell division</keyword>
<keyword id="KW-0175">Coiled coil</keyword>
<keyword id="KW-0963">Cytoplasm</keyword>
<keyword id="KW-0206">Cytoskeleton</keyword>
<keyword id="KW-0217">Developmental protein</keyword>
<keyword id="KW-0221">Differentiation</keyword>
<keyword id="KW-0493">Microtubule</keyword>
<keyword id="KW-0498">Mitosis</keyword>
<keyword id="KW-0524">Neurogenesis</keyword>
<keyword id="KW-1185">Reference proteome</keyword>
<keyword id="KW-0677">Repeat</keyword>
<keyword id="KW-0813">Transport</keyword>
<keyword id="KW-0853">WD repeat</keyword>